<name>FADB_SHIB3</name>
<gene>
    <name evidence="1" type="primary">fadB</name>
    <name type="ordered locus">SbBS512_E4316</name>
</gene>
<proteinExistence type="inferred from homology"/>
<dbReference type="EC" id="4.2.1.17" evidence="1"/>
<dbReference type="EC" id="5.1.2.3" evidence="1"/>
<dbReference type="EC" id="5.3.3.8" evidence="1"/>
<dbReference type="EC" id="1.1.1.35" evidence="1"/>
<dbReference type="EMBL" id="CP001063">
    <property type="protein sequence ID" value="ACD09318.1"/>
    <property type="molecule type" value="Genomic_DNA"/>
</dbReference>
<dbReference type="RefSeq" id="WP_000965943.1">
    <property type="nucleotide sequence ID" value="NC_010658.1"/>
</dbReference>
<dbReference type="SMR" id="B2TVJ5"/>
<dbReference type="STRING" id="344609.SbBS512_E4316"/>
<dbReference type="KEGG" id="sbc:SbBS512_E4316"/>
<dbReference type="HOGENOM" id="CLU_009834_16_3_6"/>
<dbReference type="UniPathway" id="UPA00659"/>
<dbReference type="Proteomes" id="UP000001030">
    <property type="component" value="Chromosome"/>
</dbReference>
<dbReference type="GO" id="GO:0036125">
    <property type="term" value="C:fatty acid beta-oxidation multienzyme complex"/>
    <property type="evidence" value="ECO:0007669"/>
    <property type="project" value="InterPro"/>
</dbReference>
<dbReference type="GO" id="GO:0008692">
    <property type="term" value="F:3-hydroxybutyryl-CoA epimerase activity"/>
    <property type="evidence" value="ECO:0007669"/>
    <property type="project" value="UniProtKB-UniRule"/>
</dbReference>
<dbReference type="GO" id="GO:0004165">
    <property type="term" value="F:delta(3)-delta(2)-enoyl-CoA isomerase activity"/>
    <property type="evidence" value="ECO:0007669"/>
    <property type="project" value="UniProtKB-UniRule"/>
</dbReference>
<dbReference type="GO" id="GO:0004300">
    <property type="term" value="F:enoyl-CoA hydratase activity"/>
    <property type="evidence" value="ECO:0007669"/>
    <property type="project" value="UniProtKB-UniRule"/>
</dbReference>
<dbReference type="GO" id="GO:0016509">
    <property type="term" value="F:long-chain-3-hydroxyacyl-CoA dehydrogenase activity"/>
    <property type="evidence" value="ECO:0007669"/>
    <property type="project" value="TreeGrafter"/>
</dbReference>
<dbReference type="GO" id="GO:0070403">
    <property type="term" value="F:NAD+ binding"/>
    <property type="evidence" value="ECO:0007669"/>
    <property type="project" value="InterPro"/>
</dbReference>
<dbReference type="GO" id="GO:0006635">
    <property type="term" value="P:fatty acid beta-oxidation"/>
    <property type="evidence" value="ECO:0007669"/>
    <property type="project" value="UniProtKB-UniRule"/>
</dbReference>
<dbReference type="CDD" id="cd06558">
    <property type="entry name" value="crotonase-like"/>
    <property type="match status" value="1"/>
</dbReference>
<dbReference type="FunFam" id="1.10.1040.50:FF:000001">
    <property type="entry name" value="Fatty acid oxidation complex subunit alpha"/>
    <property type="match status" value="1"/>
</dbReference>
<dbReference type="FunFam" id="3.90.226.10:FF:000018">
    <property type="entry name" value="Fatty acid oxidation complex subunit alpha"/>
    <property type="match status" value="1"/>
</dbReference>
<dbReference type="FunFam" id="3.40.50.720:FF:000009">
    <property type="entry name" value="Fatty oxidation complex, alpha subunit"/>
    <property type="match status" value="1"/>
</dbReference>
<dbReference type="Gene3D" id="1.10.1040.50">
    <property type="match status" value="1"/>
</dbReference>
<dbReference type="Gene3D" id="3.90.226.10">
    <property type="entry name" value="2-enoyl-CoA Hydratase, Chain A, domain 1"/>
    <property type="match status" value="1"/>
</dbReference>
<dbReference type="Gene3D" id="3.40.50.720">
    <property type="entry name" value="NAD(P)-binding Rossmann-like Domain"/>
    <property type="match status" value="1"/>
</dbReference>
<dbReference type="HAMAP" id="MF_01621">
    <property type="entry name" value="FadB"/>
    <property type="match status" value="1"/>
</dbReference>
<dbReference type="InterPro" id="IPR006180">
    <property type="entry name" value="3-OHacyl-CoA_DH_CS"/>
</dbReference>
<dbReference type="InterPro" id="IPR006176">
    <property type="entry name" value="3-OHacyl-CoA_DH_NAD-bd"/>
</dbReference>
<dbReference type="InterPro" id="IPR006108">
    <property type="entry name" value="3HC_DH_C"/>
</dbReference>
<dbReference type="InterPro" id="IPR008927">
    <property type="entry name" value="6-PGluconate_DH-like_C_sf"/>
</dbReference>
<dbReference type="InterPro" id="IPR029045">
    <property type="entry name" value="ClpP/crotonase-like_dom_sf"/>
</dbReference>
<dbReference type="InterPro" id="IPR018376">
    <property type="entry name" value="Enoyl-CoA_hyd/isom_CS"/>
</dbReference>
<dbReference type="InterPro" id="IPR001753">
    <property type="entry name" value="Enoyl-CoA_hydra/iso"/>
</dbReference>
<dbReference type="InterPro" id="IPR050136">
    <property type="entry name" value="FA_oxidation_alpha_subunit"/>
</dbReference>
<dbReference type="InterPro" id="IPR012799">
    <property type="entry name" value="FadB"/>
</dbReference>
<dbReference type="InterPro" id="IPR036291">
    <property type="entry name" value="NAD(P)-bd_dom_sf"/>
</dbReference>
<dbReference type="NCBIfam" id="TIGR02437">
    <property type="entry name" value="FadB"/>
    <property type="match status" value="1"/>
</dbReference>
<dbReference type="NCBIfam" id="NF008727">
    <property type="entry name" value="PRK11730.1"/>
    <property type="match status" value="1"/>
</dbReference>
<dbReference type="PANTHER" id="PTHR43612">
    <property type="entry name" value="TRIFUNCTIONAL ENZYME SUBUNIT ALPHA"/>
    <property type="match status" value="1"/>
</dbReference>
<dbReference type="PANTHER" id="PTHR43612:SF3">
    <property type="entry name" value="TRIFUNCTIONAL ENZYME SUBUNIT ALPHA, MITOCHONDRIAL"/>
    <property type="match status" value="1"/>
</dbReference>
<dbReference type="Pfam" id="PF00725">
    <property type="entry name" value="3HCDH"/>
    <property type="match status" value="2"/>
</dbReference>
<dbReference type="Pfam" id="PF02737">
    <property type="entry name" value="3HCDH_N"/>
    <property type="match status" value="1"/>
</dbReference>
<dbReference type="Pfam" id="PF00378">
    <property type="entry name" value="ECH_1"/>
    <property type="match status" value="1"/>
</dbReference>
<dbReference type="SUPFAM" id="SSF48179">
    <property type="entry name" value="6-phosphogluconate dehydrogenase C-terminal domain-like"/>
    <property type="match status" value="2"/>
</dbReference>
<dbReference type="SUPFAM" id="SSF52096">
    <property type="entry name" value="ClpP/crotonase"/>
    <property type="match status" value="1"/>
</dbReference>
<dbReference type="SUPFAM" id="SSF51735">
    <property type="entry name" value="NAD(P)-binding Rossmann-fold domains"/>
    <property type="match status" value="1"/>
</dbReference>
<dbReference type="PROSITE" id="PS00067">
    <property type="entry name" value="3HCDH"/>
    <property type="match status" value="1"/>
</dbReference>
<dbReference type="PROSITE" id="PS00166">
    <property type="entry name" value="ENOYL_COA_HYDRATASE"/>
    <property type="match status" value="1"/>
</dbReference>
<reference key="1">
    <citation type="submission" date="2008-05" db="EMBL/GenBank/DDBJ databases">
        <title>Complete sequence of Shigella boydii serotype 18 strain BS512.</title>
        <authorList>
            <person name="Rasko D.A."/>
            <person name="Rosovitz M."/>
            <person name="Maurelli A.T."/>
            <person name="Myers G."/>
            <person name="Seshadri R."/>
            <person name="Cer R."/>
            <person name="Jiang L."/>
            <person name="Ravel J."/>
            <person name="Sebastian Y."/>
        </authorList>
    </citation>
    <scope>NUCLEOTIDE SEQUENCE [LARGE SCALE GENOMIC DNA]</scope>
    <source>
        <strain>CDC 3083-94 / BS512</strain>
    </source>
</reference>
<evidence type="ECO:0000255" key="1">
    <source>
        <dbReference type="HAMAP-Rule" id="MF_01621"/>
    </source>
</evidence>
<evidence type="ECO:0000256" key="2">
    <source>
        <dbReference type="SAM" id="MobiDB-lite"/>
    </source>
</evidence>
<feature type="chain" id="PRO_1000186056" description="Fatty acid oxidation complex subunit alpha">
    <location>
        <begin position="1"/>
        <end position="729"/>
    </location>
</feature>
<feature type="region of interest" description="Enoyl-CoA hydratase/isomerase" evidence="1">
    <location>
        <begin position="1"/>
        <end position="189"/>
    </location>
</feature>
<feature type="region of interest" description="3-hydroxyacyl-CoA dehydrogenase" evidence="1">
    <location>
        <begin position="311"/>
        <end position="729"/>
    </location>
</feature>
<feature type="region of interest" description="Disordered" evidence="2">
    <location>
        <begin position="708"/>
        <end position="729"/>
    </location>
</feature>
<feature type="active site" description="For 3-hydroxyacyl-CoA dehydrogenase activity" evidence="1">
    <location>
        <position position="450"/>
    </location>
</feature>
<feature type="binding site" evidence="1">
    <location>
        <position position="296"/>
    </location>
    <ligand>
        <name>substrate</name>
    </ligand>
</feature>
<feature type="binding site" evidence="1">
    <location>
        <position position="324"/>
    </location>
    <ligand>
        <name>NAD(+)</name>
        <dbReference type="ChEBI" id="CHEBI:57540"/>
    </ligand>
</feature>
<feature type="binding site" evidence="1">
    <location>
        <position position="343"/>
    </location>
    <ligand>
        <name>NAD(+)</name>
        <dbReference type="ChEBI" id="CHEBI:57540"/>
    </ligand>
</feature>
<feature type="binding site" evidence="1">
    <location>
        <begin position="400"/>
        <end position="402"/>
    </location>
    <ligand>
        <name>NAD(+)</name>
        <dbReference type="ChEBI" id="CHEBI:57540"/>
    </ligand>
</feature>
<feature type="binding site" evidence="1">
    <location>
        <position position="407"/>
    </location>
    <ligand>
        <name>NAD(+)</name>
        <dbReference type="ChEBI" id="CHEBI:57540"/>
    </ligand>
</feature>
<feature type="binding site" evidence="1">
    <location>
        <position position="429"/>
    </location>
    <ligand>
        <name>NAD(+)</name>
        <dbReference type="ChEBI" id="CHEBI:57540"/>
    </ligand>
</feature>
<feature type="binding site" evidence="1">
    <location>
        <position position="453"/>
    </location>
    <ligand>
        <name>NAD(+)</name>
        <dbReference type="ChEBI" id="CHEBI:57540"/>
    </ligand>
</feature>
<feature type="binding site" evidence="1">
    <location>
        <position position="500"/>
    </location>
    <ligand>
        <name>substrate</name>
    </ligand>
</feature>
<feature type="binding site" evidence="1">
    <location>
        <position position="660"/>
    </location>
    <ligand>
        <name>substrate</name>
    </ligand>
</feature>
<feature type="site" description="Important for catalytic activity" evidence="1">
    <location>
        <position position="119"/>
    </location>
</feature>
<feature type="site" description="Important for catalytic activity" evidence="1">
    <location>
        <position position="139"/>
    </location>
</feature>
<organism>
    <name type="scientific">Shigella boydii serotype 18 (strain CDC 3083-94 / BS512)</name>
    <dbReference type="NCBI Taxonomy" id="344609"/>
    <lineage>
        <taxon>Bacteria</taxon>
        <taxon>Pseudomonadati</taxon>
        <taxon>Pseudomonadota</taxon>
        <taxon>Gammaproteobacteria</taxon>
        <taxon>Enterobacterales</taxon>
        <taxon>Enterobacteriaceae</taxon>
        <taxon>Shigella</taxon>
    </lineage>
</organism>
<accession>B2TVJ5</accession>
<protein>
    <recommendedName>
        <fullName evidence="1">Fatty acid oxidation complex subunit alpha</fullName>
    </recommendedName>
    <domain>
        <recommendedName>
            <fullName evidence="1">Enoyl-CoA hydratase/Delta(3)-cis-Delta(2)-trans-enoyl-CoA isomerase/3-hydroxybutyryl-CoA epimerase</fullName>
            <ecNumber evidence="1">4.2.1.17</ecNumber>
            <ecNumber evidence="1">5.1.2.3</ecNumber>
            <ecNumber evidence="1">5.3.3.8</ecNumber>
        </recommendedName>
    </domain>
    <domain>
        <recommendedName>
            <fullName evidence="1">3-hydroxyacyl-CoA dehydrogenase</fullName>
            <ecNumber evidence="1">1.1.1.35</ecNumber>
        </recommendedName>
    </domain>
</protein>
<keyword id="KW-0276">Fatty acid metabolism</keyword>
<keyword id="KW-0413">Isomerase</keyword>
<keyword id="KW-0442">Lipid degradation</keyword>
<keyword id="KW-0443">Lipid metabolism</keyword>
<keyword id="KW-0456">Lyase</keyword>
<keyword id="KW-0511">Multifunctional enzyme</keyword>
<keyword id="KW-0520">NAD</keyword>
<keyword id="KW-0560">Oxidoreductase</keyword>
<keyword id="KW-1185">Reference proteome</keyword>
<sequence length="729" mass="79549">MLYKGDTLYLDWLEDGIAELVFDAPGSVNKLDTATVASLGEAIGVLEQQSDLKGLLLRSNKAAFIVGADITEFLSLFLVPEEQLSQWLHFANSVFNRLEDLPVPTIAAVNGYALGGGCECVLATDYRLATPDLRIGLPETKLGIMPGFGGSVRMPRMLGADSALEIIAAGKDVGADQALKIGLVDGVVKAEKLVEGAKAVLRQAINGDLDWKAKRQPKLEPLKLSKIEATMSFTIAKGMVAQTAGKHYPAPITAVKTIEAAARFGREEALNLENKSFVPLAHTNEARALVGIFLNDQYVKGKAKKLTKDVETPKQAAVLGAGIMGGGIAYQSAWKGVPVVMKDINDKSLTLGMTEAAKLLNKQLERGKIDGLKLAGVISTIHPTLDYAGFDRVDVVVEAVVENPKVKKAVLAETEQKVRPDTVLASNTSTIPISELANALERPENFCGMHFFNPVHRMPLVEIIRGEKSSDETIAKVVAWASKMGKTPIVVNDCPGFFVNRVLFPYFAGFSQLLRDGADFRKIDKVMEKQFGWPMGPAYLLDVVGIDTAHHAQAVMAAGFPQRMQKDYRDAIDALFDANRFGQKNGLGFWRYKEDSKGKPKKEEDAAVEDLLAEVSQPKRDFSEEEIIARMMIPMVNEVVRCLEEGIIATPAEADMALVYGLGFPPFHGGAFRWLDTLGSAKYLDMAQQYQHLGPLYEVPEGLRNKARHNEPYYPPVEPARPVGDLKTA</sequence>
<comment type="function">
    <text evidence="1">Involved in the aerobic and anaerobic degradation of long-chain fatty acids via beta-oxidation cycle. Catalyzes the formation of 3-oxoacyl-CoA from enoyl-CoA via L-3-hydroxyacyl-CoA. It can also use D-3-hydroxyacyl-CoA and cis-3-enoyl-CoA as substrate.</text>
</comment>
<comment type="catalytic activity">
    <reaction evidence="1">
        <text>a (3S)-3-hydroxyacyl-CoA + NAD(+) = a 3-oxoacyl-CoA + NADH + H(+)</text>
        <dbReference type="Rhea" id="RHEA:22432"/>
        <dbReference type="ChEBI" id="CHEBI:15378"/>
        <dbReference type="ChEBI" id="CHEBI:57318"/>
        <dbReference type="ChEBI" id="CHEBI:57540"/>
        <dbReference type="ChEBI" id="CHEBI:57945"/>
        <dbReference type="ChEBI" id="CHEBI:90726"/>
        <dbReference type="EC" id="1.1.1.35"/>
    </reaction>
</comment>
<comment type="catalytic activity">
    <reaction evidence="1">
        <text>a (3S)-3-hydroxyacyl-CoA = a (2E)-enoyl-CoA + H2O</text>
        <dbReference type="Rhea" id="RHEA:16105"/>
        <dbReference type="ChEBI" id="CHEBI:15377"/>
        <dbReference type="ChEBI" id="CHEBI:57318"/>
        <dbReference type="ChEBI" id="CHEBI:58856"/>
        <dbReference type="EC" id="4.2.1.17"/>
    </reaction>
</comment>
<comment type="catalytic activity">
    <reaction evidence="1">
        <text>a 4-saturated-(3S)-3-hydroxyacyl-CoA = a (3E)-enoyl-CoA + H2O</text>
        <dbReference type="Rhea" id="RHEA:20724"/>
        <dbReference type="ChEBI" id="CHEBI:15377"/>
        <dbReference type="ChEBI" id="CHEBI:58521"/>
        <dbReference type="ChEBI" id="CHEBI:137480"/>
        <dbReference type="EC" id="4.2.1.17"/>
    </reaction>
</comment>
<comment type="catalytic activity">
    <reaction evidence="1">
        <text>(3S)-3-hydroxybutanoyl-CoA = (3R)-3-hydroxybutanoyl-CoA</text>
        <dbReference type="Rhea" id="RHEA:21760"/>
        <dbReference type="ChEBI" id="CHEBI:57315"/>
        <dbReference type="ChEBI" id="CHEBI:57316"/>
        <dbReference type="EC" id="5.1.2.3"/>
    </reaction>
</comment>
<comment type="catalytic activity">
    <reaction evidence="1">
        <text>a (3Z)-enoyl-CoA = a 4-saturated (2E)-enoyl-CoA</text>
        <dbReference type="Rhea" id="RHEA:45900"/>
        <dbReference type="ChEBI" id="CHEBI:85097"/>
        <dbReference type="ChEBI" id="CHEBI:85489"/>
        <dbReference type="EC" id="5.3.3.8"/>
    </reaction>
</comment>
<comment type="catalytic activity">
    <reaction evidence="1">
        <text>a (3E)-enoyl-CoA = a 4-saturated (2E)-enoyl-CoA</text>
        <dbReference type="Rhea" id="RHEA:45228"/>
        <dbReference type="ChEBI" id="CHEBI:58521"/>
        <dbReference type="ChEBI" id="CHEBI:85097"/>
        <dbReference type="EC" id="5.3.3.8"/>
    </reaction>
</comment>
<comment type="pathway">
    <text evidence="1">Lipid metabolism; fatty acid beta-oxidation.</text>
</comment>
<comment type="subunit">
    <text evidence="1">Heterotetramer of two alpha chains (FadB) and two beta chains (FadA).</text>
</comment>
<comment type="similarity">
    <text evidence="1">In the N-terminal section; belongs to the enoyl-CoA hydratase/isomerase family.</text>
</comment>
<comment type="similarity">
    <text evidence="1">In the C-terminal section; belongs to the 3-hydroxyacyl-CoA dehydrogenase family.</text>
</comment>